<organism>
    <name type="scientific">Escherichia coli (strain ATCC 8739 / DSM 1576 / NBRC 3972 / NCIMB 8545 / WDCM 00012 / Crooks)</name>
    <dbReference type="NCBI Taxonomy" id="481805"/>
    <lineage>
        <taxon>Bacteria</taxon>
        <taxon>Pseudomonadati</taxon>
        <taxon>Pseudomonadota</taxon>
        <taxon>Gammaproteobacteria</taxon>
        <taxon>Enterobacterales</taxon>
        <taxon>Enterobacteriaceae</taxon>
        <taxon>Escherichia</taxon>
    </lineage>
</organism>
<reference key="1">
    <citation type="submission" date="2008-02" db="EMBL/GenBank/DDBJ databases">
        <title>Complete sequence of Escherichia coli C str. ATCC 8739.</title>
        <authorList>
            <person name="Copeland A."/>
            <person name="Lucas S."/>
            <person name="Lapidus A."/>
            <person name="Glavina del Rio T."/>
            <person name="Dalin E."/>
            <person name="Tice H."/>
            <person name="Bruce D."/>
            <person name="Goodwin L."/>
            <person name="Pitluck S."/>
            <person name="Kiss H."/>
            <person name="Brettin T."/>
            <person name="Detter J.C."/>
            <person name="Han C."/>
            <person name="Kuske C.R."/>
            <person name="Schmutz J."/>
            <person name="Larimer F."/>
            <person name="Land M."/>
            <person name="Hauser L."/>
            <person name="Kyrpides N."/>
            <person name="Mikhailova N."/>
            <person name="Ingram L."/>
            <person name="Richardson P."/>
        </authorList>
    </citation>
    <scope>NUCLEOTIDE SEQUENCE [LARGE SCALE GENOMIC DNA]</scope>
    <source>
        <strain>ATCC 8739 / DSM 1576 / NBRC 3972 / NCIMB 8545 / WDCM 00012 / Crooks</strain>
    </source>
</reference>
<protein>
    <recommendedName>
        <fullName evidence="1">Flagellar protein FliT</fullName>
    </recommendedName>
</protein>
<evidence type="ECO:0000255" key="1">
    <source>
        <dbReference type="HAMAP-Rule" id="MF_01180"/>
    </source>
</evidence>
<name>FLIT_ECOLC</name>
<proteinExistence type="inferred from homology"/>
<dbReference type="EMBL" id="CP000946">
    <property type="protein sequence ID" value="ACA77363.1"/>
    <property type="molecule type" value="Genomic_DNA"/>
</dbReference>
<dbReference type="RefSeq" id="WP_001015022.1">
    <property type="nucleotide sequence ID" value="NZ_MTFT01000011.1"/>
</dbReference>
<dbReference type="SMR" id="B1IZX8"/>
<dbReference type="KEGG" id="ecl:EcolC_1713"/>
<dbReference type="HOGENOM" id="CLU_155793_1_1_6"/>
<dbReference type="GO" id="GO:0005829">
    <property type="term" value="C:cytosol"/>
    <property type="evidence" value="ECO:0007669"/>
    <property type="project" value="UniProtKB-SubCell"/>
</dbReference>
<dbReference type="GO" id="GO:0044781">
    <property type="term" value="P:bacterial-type flagellum organization"/>
    <property type="evidence" value="ECO:0007669"/>
    <property type="project" value="UniProtKB-KW"/>
</dbReference>
<dbReference type="GO" id="GO:1902209">
    <property type="term" value="P:negative regulation of bacterial-type flagellum assembly"/>
    <property type="evidence" value="ECO:0007669"/>
    <property type="project" value="UniProtKB-UniRule"/>
</dbReference>
<dbReference type="GO" id="GO:0006457">
    <property type="term" value="P:protein folding"/>
    <property type="evidence" value="ECO:0007669"/>
    <property type="project" value="UniProtKB-UniRule"/>
</dbReference>
<dbReference type="FunFam" id="1.20.58.380:FF:000001">
    <property type="entry name" value="Flagellar protein FliT"/>
    <property type="match status" value="1"/>
</dbReference>
<dbReference type="Gene3D" id="1.20.58.380">
    <property type="entry name" value="Flagellar protein flit"/>
    <property type="match status" value="1"/>
</dbReference>
<dbReference type="HAMAP" id="MF_01180">
    <property type="entry name" value="FliT"/>
    <property type="match status" value="1"/>
</dbReference>
<dbReference type="InterPro" id="IPR008622">
    <property type="entry name" value="FliT"/>
</dbReference>
<dbReference type="NCBIfam" id="NF007836">
    <property type="entry name" value="PRK10548.1"/>
    <property type="match status" value="1"/>
</dbReference>
<dbReference type="Pfam" id="PF05400">
    <property type="entry name" value="FliT"/>
    <property type="match status" value="1"/>
</dbReference>
<feature type="chain" id="PRO_0000353877" description="Flagellar protein FliT">
    <location>
        <begin position="1"/>
        <end position="121"/>
    </location>
</feature>
<feature type="region of interest" description="Required for homodimerization" evidence="1">
    <location>
        <begin position="1"/>
        <end position="50"/>
    </location>
</feature>
<feature type="region of interest" description="FliD binding" evidence="1">
    <location>
        <begin position="60"/>
        <end position="98"/>
    </location>
</feature>
<accession>B1IZX8</accession>
<comment type="function">
    <text evidence="1">Dual-function protein that regulates the transcription of class 2 flagellar operons and that also acts as an export chaperone for the filament-capping protein FliD. As a transcriptional regulator, acts as an anti-FlhDC factor; it directly binds FlhC, thus inhibiting the binding of the FlhC/FlhD complex to class 2 promoters, resulting in decreased expression of class 2 flagellar operons. As a chaperone, effects FliD transition to the membrane by preventing its premature polymerization, and by directing it to the export apparatus.</text>
</comment>
<comment type="subunit">
    <text evidence="1">Homodimer. Interacts with FliD and FlhC.</text>
</comment>
<comment type="subcellular location">
    <subcellularLocation>
        <location evidence="1">Cytoplasm</location>
        <location evidence="1">Cytosol</location>
    </subcellularLocation>
</comment>
<comment type="similarity">
    <text evidence="1">Belongs to the FliT family.</text>
</comment>
<gene>
    <name evidence="1" type="primary">fliT</name>
    <name type="ordered locus">EcolC_1713</name>
</gene>
<sequence>MNHAPHLYFAWQQLVEKSQLMLRLATEEQWDELIASEMAYVNAVQEIAHLTEEIDPSTTMQEQLRPMLRLILDNESKVKQLLQIRMDELAKLVGQSSVQKSVLSAYGDQGGFVLAPQDNFS</sequence>
<keyword id="KW-1005">Bacterial flagellum biogenesis</keyword>
<keyword id="KW-0143">Chaperone</keyword>
<keyword id="KW-0963">Cytoplasm</keyword>
<keyword id="KW-0678">Repressor</keyword>
<keyword id="KW-0804">Transcription</keyword>
<keyword id="KW-0805">Transcription regulation</keyword>